<name>GUAA_LEGPC</name>
<keyword id="KW-0067">ATP-binding</keyword>
<keyword id="KW-0315">Glutamine amidotransferase</keyword>
<keyword id="KW-0332">GMP biosynthesis</keyword>
<keyword id="KW-0436">Ligase</keyword>
<keyword id="KW-0547">Nucleotide-binding</keyword>
<keyword id="KW-0658">Purine biosynthesis</keyword>
<reference key="1">
    <citation type="submission" date="2006-11" db="EMBL/GenBank/DDBJ databases">
        <title>Identification and characterization of a new conjugation/ type IVA secretion system (trb/tra) of L. pneumophila Corby localized on a mobile genomic island.</title>
        <authorList>
            <person name="Gloeckner G."/>
            <person name="Albert-Weissenberger C."/>
            <person name="Weinmann E."/>
            <person name="Jacobi S."/>
            <person name="Schunder E."/>
            <person name="Steinert M."/>
            <person name="Buchrieser C."/>
            <person name="Hacker J."/>
            <person name="Heuner K."/>
        </authorList>
    </citation>
    <scope>NUCLEOTIDE SEQUENCE [LARGE SCALE GENOMIC DNA]</scope>
    <source>
        <strain>Corby</strain>
    </source>
</reference>
<proteinExistence type="inferred from homology"/>
<feature type="chain" id="PRO_1000120331" description="GMP synthase [glutamine-hydrolyzing]">
    <location>
        <begin position="1"/>
        <end position="525"/>
    </location>
</feature>
<feature type="domain" description="Glutamine amidotransferase type-1" evidence="1">
    <location>
        <begin position="8"/>
        <end position="206"/>
    </location>
</feature>
<feature type="domain" description="GMPS ATP-PPase" evidence="1">
    <location>
        <begin position="207"/>
        <end position="400"/>
    </location>
</feature>
<feature type="active site" description="Nucleophile" evidence="1">
    <location>
        <position position="85"/>
    </location>
</feature>
<feature type="active site" evidence="1">
    <location>
        <position position="180"/>
    </location>
</feature>
<feature type="active site" evidence="1">
    <location>
        <position position="182"/>
    </location>
</feature>
<feature type="binding site" evidence="1">
    <location>
        <begin position="234"/>
        <end position="240"/>
    </location>
    <ligand>
        <name>ATP</name>
        <dbReference type="ChEBI" id="CHEBI:30616"/>
    </ligand>
</feature>
<evidence type="ECO:0000255" key="1">
    <source>
        <dbReference type="HAMAP-Rule" id="MF_00344"/>
    </source>
</evidence>
<dbReference type="EC" id="6.3.5.2" evidence="1"/>
<dbReference type="EMBL" id="CP000675">
    <property type="protein sequence ID" value="ABQ55122.1"/>
    <property type="molecule type" value="Genomic_DNA"/>
</dbReference>
<dbReference type="RefSeq" id="WP_011946679.1">
    <property type="nucleotide sequence ID" value="NZ_JAPMSS010000002.1"/>
</dbReference>
<dbReference type="SMR" id="A5ICM2"/>
<dbReference type="KEGG" id="lpc:LPC_1156"/>
<dbReference type="HOGENOM" id="CLU_014340_0_5_6"/>
<dbReference type="UniPathway" id="UPA00189">
    <property type="reaction ID" value="UER00296"/>
</dbReference>
<dbReference type="GO" id="GO:0005829">
    <property type="term" value="C:cytosol"/>
    <property type="evidence" value="ECO:0007669"/>
    <property type="project" value="TreeGrafter"/>
</dbReference>
<dbReference type="GO" id="GO:0005524">
    <property type="term" value="F:ATP binding"/>
    <property type="evidence" value="ECO:0007669"/>
    <property type="project" value="UniProtKB-UniRule"/>
</dbReference>
<dbReference type="GO" id="GO:0003921">
    <property type="term" value="F:GMP synthase activity"/>
    <property type="evidence" value="ECO:0007669"/>
    <property type="project" value="InterPro"/>
</dbReference>
<dbReference type="CDD" id="cd01742">
    <property type="entry name" value="GATase1_GMP_Synthase"/>
    <property type="match status" value="1"/>
</dbReference>
<dbReference type="CDD" id="cd01997">
    <property type="entry name" value="GMP_synthase_C"/>
    <property type="match status" value="1"/>
</dbReference>
<dbReference type="FunFam" id="3.30.300.10:FF:000002">
    <property type="entry name" value="GMP synthase [glutamine-hydrolyzing]"/>
    <property type="match status" value="1"/>
</dbReference>
<dbReference type="FunFam" id="3.40.50.620:FF:000001">
    <property type="entry name" value="GMP synthase [glutamine-hydrolyzing]"/>
    <property type="match status" value="1"/>
</dbReference>
<dbReference type="FunFam" id="3.40.50.880:FF:000001">
    <property type="entry name" value="GMP synthase [glutamine-hydrolyzing]"/>
    <property type="match status" value="1"/>
</dbReference>
<dbReference type="Gene3D" id="3.30.300.10">
    <property type="match status" value="1"/>
</dbReference>
<dbReference type="Gene3D" id="3.40.50.880">
    <property type="match status" value="1"/>
</dbReference>
<dbReference type="Gene3D" id="3.40.50.620">
    <property type="entry name" value="HUPs"/>
    <property type="match status" value="1"/>
</dbReference>
<dbReference type="HAMAP" id="MF_00344">
    <property type="entry name" value="GMP_synthase"/>
    <property type="match status" value="1"/>
</dbReference>
<dbReference type="InterPro" id="IPR029062">
    <property type="entry name" value="Class_I_gatase-like"/>
</dbReference>
<dbReference type="InterPro" id="IPR017926">
    <property type="entry name" value="GATASE"/>
</dbReference>
<dbReference type="InterPro" id="IPR001674">
    <property type="entry name" value="GMP_synth_C"/>
</dbReference>
<dbReference type="InterPro" id="IPR004739">
    <property type="entry name" value="GMP_synth_GATase"/>
</dbReference>
<dbReference type="InterPro" id="IPR022955">
    <property type="entry name" value="GMP_synthase"/>
</dbReference>
<dbReference type="InterPro" id="IPR025777">
    <property type="entry name" value="GMPS_ATP_PPase_dom"/>
</dbReference>
<dbReference type="InterPro" id="IPR022310">
    <property type="entry name" value="NAD/GMP_synthase"/>
</dbReference>
<dbReference type="InterPro" id="IPR014729">
    <property type="entry name" value="Rossmann-like_a/b/a_fold"/>
</dbReference>
<dbReference type="NCBIfam" id="TIGR00884">
    <property type="entry name" value="guaA_Cterm"/>
    <property type="match status" value="1"/>
</dbReference>
<dbReference type="NCBIfam" id="TIGR00888">
    <property type="entry name" value="guaA_Nterm"/>
    <property type="match status" value="1"/>
</dbReference>
<dbReference type="NCBIfam" id="NF000848">
    <property type="entry name" value="PRK00074.1"/>
    <property type="match status" value="1"/>
</dbReference>
<dbReference type="PANTHER" id="PTHR11922:SF2">
    <property type="entry name" value="GMP SYNTHASE [GLUTAMINE-HYDROLYZING]"/>
    <property type="match status" value="1"/>
</dbReference>
<dbReference type="PANTHER" id="PTHR11922">
    <property type="entry name" value="GMP SYNTHASE-RELATED"/>
    <property type="match status" value="1"/>
</dbReference>
<dbReference type="Pfam" id="PF00117">
    <property type="entry name" value="GATase"/>
    <property type="match status" value="1"/>
</dbReference>
<dbReference type="Pfam" id="PF00958">
    <property type="entry name" value="GMP_synt_C"/>
    <property type="match status" value="1"/>
</dbReference>
<dbReference type="Pfam" id="PF02540">
    <property type="entry name" value="NAD_synthase"/>
    <property type="match status" value="1"/>
</dbReference>
<dbReference type="PRINTS" id="PR00097">
    <property type="entry name" value="ANTSNTHASEII"/>
</dbReference>
<dbReference type="PRINTS" id="PR00099">
    <property type="entry name" value="CPSGATASE"/>
</dbReference>
<dbReference type="PRINTS" id="PR00096">
    <property type="entry name" value="GATASE"/>
</dbReference>
<dbReference type="SUPFAM" id="SSF52402">
    <property type="entry name" value="Adenine nucleotide alpha hydrolases-like"/>
    <property type="match status" value="1"/>
</dbReference>
<dbReference type="SUPFAM" id="SSF52317">
    <property type="entry name" value="Class I glutamine amidotransferase-like"/>
    <property type="match status" value="1"/>
</dbReference>
<dbReference type="SUPFAM" id="SSF54810">
    <property type="entry name" value="GMP synthetase C-terminal dimerisation domain"/>
    <property type="match status" value="1"/>
</dbReference>
<dbReference type="PROSITE" id="PS51273">
    <property type="entry name" value="GATASE_TYPE_1"/>
    <property type="match status" value="1"/>
</dbReference>
<dbReference type="PROSITE" id="PS51553">
    <property type="entry name" value="GMPS_ATP_PPASE"/>
    <property type="match status" value="1"/>
</dbReference>
<protein>
    <recommendedName>
        <fullName evidence="1">GMP synthase [glutamine-hydrolyzing]</fullName>
        <ecNumber evidence="1">6.3.5.2</ecNumber>
    </recommendedName>
    <alternativeName>
        <fullName evidence="1">GMP synthetase</fullName>
    </alternativeName>
    <alternativeName>
        <fullName evidence="1">Glutamine amidotransferase</fullName>
    </alternativeName>
</protein>
<gene>
    <name evidence="1" type="primary">guaA</name>
    <name type="ordered locus">LPC_1156</name>
</gene>
<organism>
    <name type="scientific">Legionella pneumophila (strain Corby)</name>
    <dbReference type="NCBI Taxonomy" id="400673"/>
    <lineage>
        <taxon>Bacteria</taxon>
        <taxon>Pseudomonadati</taxon>
        <taxon>Pseudomonadota</taxon>
        <taxon>Gammaproteobacteria</taxon>
        <taxon>Legionellales</taxon>
        <taxon>Legionellaceae</taxon>
        <taxon>Legionella</taxon>
    </lineage>
</organism>
<sequence length="525" mass="58661">MNDLKKSPLLILDFGSQYTQLIARRVREMGVYCEIYPYHINHEQFKKLNPCGVILSGGPSTVTHDANPRAPQWLFESDLPLLGICYGMQTMAVQLGGQVHSSALREFGYAELRLHGHSQLLSNIEDRTAVDGSALLDVWMSHGDKVTELPPGFKVICETRNAPIAGMADESRQMYGLQFHPEVTHTLQGLRILQRFVVDICKAPTEWTPEHIIDEAINKIREQVGTEKVLLGLSGGVDSSVVAALLHRAIGEQLVCVFVDTGLLRLNEAEQVLSMFGRHMGIRIIAVNAEDKFLTALKGVTCPEEKRKIIGRTFIEVFDEEAQKLTDIKWLAQGTIYPDVIESAATSTNDAAVVIKSHHNVGGLPDTLNLKLLEPIRELFKDEVRQVGLELGLPHDMVYRHPFPGPGLGVRILAEVKKEYADILRKADAIFIEELHNAQLYHKISQAFAVFLPVKSVGVMGDGRRYDYVICLRAVETVDFMTAHWSQLPWDFLGKVSNRIINEVEGVSRVTYDISGKPPATIEWE</sequence>
<accession>A5ICM2</accession>
<comment type="function">
    <text evidence="1">Catalyzes the synthesis of GMP from XMP.</text>
</comment>
<comment type="catalytic activity">
    <reaction evidence="1">
        <text>XMP + L-glutamine + ATP + H2O = GMP + L-glutamate + AMP + diphosphate + 2 H(+)</text>
        <dbReference type="Rhea" id="RHEA:11680"/>
        <dbReference type="ChEBI" id="CHEBI:15377"/>
        <dbReference type="ChEBI" id="CHEBI:15378"/>
        <dbReference type="ChEBI" id="CHEBI:29985"/>
        <dbReference type="ChEBI" id="CHEBI:30616"/>
        <dbReference type="ChEBI" id="CHEBI:33019"/>
        <dbReference type="ChEBI" id="CHEBI:57464"/>
        <dbReference type="ChEBI" id="CHEBI:58115"/>
        <dbReference type="ChEBI" id="CHEBI:58359"/>
        <dbReference type="ChEBI" id="CHEBI:456215"/>
        <dbReference type="EC" id="6.3.5.2"/>
    </reaction>
</comment>
<comment type="pathway">
    <text evidence="1">Purine metabolism; GMP biosynthesis; GMP from XMP (L-Gln route): step 1/1.</text>
</comment>
<comment type="subunit">
    <text evidence="1">Homodimer.</text>
</comment>